<reference key="1">
    <citation type="journal article" date="1991" name="J. Ferment. Bioeng.">
        <title>Cloning and sequencing of the gene encoding cytochrome c-553 (CO) from Gluconabacter suboxydans.</title>
        <authorList>
            <person name="Takeda Y."/>
            <person name="Shimizu T."/>
        </authorList>
    </citation>
    <scope>NUCLEOTIDE SEQUENCE [GENOMIC DNA]</scope>
</reference>
<reference key="2">
    <citation type="journal article" date="1997" name="Appl. Environ. Microbiol.">
        <title>Characterization of the genes encoding the three-component membrane-bound alcohol dehydrogenase from Gluconobacter suboxydans and their expression in Acetobacter pasteurianus.</title>
        <authorList>
            <person name="Kondo K."/>
            <person name="Horinouchi S."/>
        </authorList>
    </citation>
    <scope>NUCLEOTIDE SEQUENCE [GENOMIC DNA]</scope>
    <scope>PROTEIN SEQUENCE OF 37-52</scope>
    <scope>FUNCTION</scope>
    <scope>PYROGLUTAMATE FORMATION AT GLN-37</scope>
    <source>
        <strain>ATCC 621 / DSM 50049 / NBRC 3172 / NCIMB 7069 / NRRL B-72</strain>
    </source>
</reference>
<reference key="3">
    <citation type="journal article" date="2005" name="Nat. Biotechnol.">
        <title>Complete genome sequence of the acetic acid bacterium Gluconobacter oxydans.</title>
        <authorList>
            <person name="Prust C."/>
            <person name="Hoffmeister M."/>
            <person name="Liesegang H."/>
            <person name="Wiezer A."/>
            <person name="Fricke W.F."/>
            <person name="Ehrenreich A."/>
            <person name="Gottschalk G."/>
            <person name="Deppenmeier U."/>
        </authorList>
    </citation>
    <scope>NUCLEOTIDE SEQUENCE [LARGE SCALE GENOMIC DNA]</scope>
    <source>
        <strain>621H</strain>
    </source>
</reference>
<reference key="4">
    <citation type="journal article" date="1991" name="J. Bacteriol.">
        <title>Reconstitution of the ethanol oxidase respiratory chain in membranes of quinoprotein alcohol dehydrogenase-deficient Gluconobacter suboxydans subsp. alpha strains.</title>
        <authorList>
            <person name="Matsushita K."/>
            <person name="Nagatani Y."/>
            <person name="Shinagawa E."/>
            <person name="Adachi O."/>
            <person name="Ameyama M."/>
        </authorList>
    </citation>
    <scope>FUNCTION</scope>
</reference>
<reference key="5">
    <citation type="journal article" date="1995" name="J. Bacteriol.">
        <title>Generation mechanism and purification of an inactive form convertible in vivo to the active form of quinoprotein alcohol dehydrogenase in Gluconobacter suboxydans.</title>
        <authorList>
            <person name="Matsushita K."/>
            <person name="Yakushi T."/>
            <person name="Takaki Y."/>
            <person name="Toyama H."/>
            <person name="Adachi O."/>
        </authorList>
    </citation>
    <scope>FUNCTION</scope>
    <scope>CATALYTIC ACTIVITY</scope>
    <scope>INDUCTION</scope>
</reference>
<reference key="6">
    <citation type="journal article" date="1996" name="J. Biol. Chem.">
        <title>Function of multiple heme c moieties in intramolecular electron transport and ubiquinone reduction in the quinohemoprotein alcohol dehydrogenase-cytochrome c complex of Gluconobacter suboxydans.</title>
        <authorList>
            <person name="Matsushita K."/>
            <person name="Yakushi T."/>
            <person name="Toyama H."/>
            <person name="Shinagawa E."/>
            <person name="Adachi O."/>
        </authorList>
    </citation>
    <scope>FUNCTION</scope>
    <scope>CATALYTIC ACTIVITY</scope>
    <scope>BIOPHYSICOCHEMICAL PROPERTIES</scope>
    <scope>COFACTOR</scope>
    <scope>SUBUNIT</scope>
</reference>
<reference key="7">
    <citation type="journal article" date="1999" name="Biochim. Biophys. Acta">
        <title>The quinohemoprotein alcohol dehydrogenase of Gluconobacter suboxydans has ubiquinol oxidation activity at a site different from the ubiquinone reduction site.</title>
        <authorList>
            <person name="Matsushita K."/>
            <person name="Yakushi T."/>
            <person name="Toyama H."/>
            <person name="Adachi O."/>
            <person name="Miyoshi H."/>
            <person name="Tagami E."/>
            <person name="Sakamoto K."/>
        </authorList>
    </citation>
    <scope>FUNCTION</scope>
    <scope>CATALYTIC ACTIVITY</scope>
    <scope>BIOPHYSICOCHEMICAL PROPERTIES</scope>
    <scope>ACTIVITY REGULATION</scope>
    <scope>SUBUNIT</scope>
    <scope>SUBSTRATE SPECIFICITY</scope>
</reference>
<reference key="8">
    <citation type="journal article" date="2008" name="Biosci. Biotechnol. Biochem.">
        <title>A tightly bound quinone functions in the ubiquinone reaction sites of quinoprotein alcohol dehydrogenase of an acetic acid bacterium, Gluconobacter suboxydans.</title>
        <authorList>
            <person name="Matsushita K."/>
            <person name="Kobayashi Y."/>
            <person name="Mizuguchi M."/>
            <person name="Toyama H."/>
            <person name="Adachi O."/>
            <person name="Sakamoto K."/>
            <person name="Miyoshi H."/>
        </authorList>
    </citation>
    <scope>FUNCTION</scope>
</reference>
<organism>
    <name type="scientific">Gluconobacter oxydans (strain 621H)</name>
    <name type="common">Gluconobacter suboxydans</name>
    <dbReference type="NCBI Taxonomy" id="290633"/>
    <lineage>
        <taxon>Bacteria</taxon>
        <taxon>Pseudomonadati</taxon>
        <taxon>Pseudomonadota</taxon>
        <taxon>Alphaproteobacteria</taxon>
        <taxon>Acetobacterales</taxon>
        <taxon>Acetobacteraceae</taxon>
        <taxon>Gluconobacter</taxon>
    </lineage>
</organism>
<protein>
    <recommendedName>
        <fullName evidence="9">Alcohol dehydrogenase (quinone), cytochrome c subunit</fullName>
        <shortName evidence="9">ADH</shortName>
        <ecNumber evidence="4 5 7">1.1.5.5</ecNumber>
    </recommendedName>
    <alternativeName>
        <fullName evidence="9">Alcohol dehydrogenase (quinone), subunit II</fullName>
    </alternativeName>
    <alternativeName>
        <fullName evidence="11">Cytochrome c-553</fullName>
    </alternativeName>
    <alternativeName>
        <fullName evidence="11">Cytochrome c553</fullName>
    </alternativeName>
    <alternativeName>
        <fullName evidence="10">Ethanol:Q2 reductase</fullName>
    </alternativeName>
    <alternativeName>
        <fullName evidence="9">G3-ADH subunit II</fullName>
    </alternativeName>
    <alternativeName>
        <fullName evidence="8">Quinohemoprotein-cytochrome c complex</fullName>
    </alternativeName>
    <alternativeName>
        <fullName evidence="10">Ubiquinol oxidase</fullName>
    </alternativeName>
</protein>
<comment type="function">
    <text evidence="2 3 4 5 7 13">Cytochrome c component of the alcohol dehydrogenase multicomponent enzyme system which is involved in the production of acetic acid and in the ethanol oxidase respiratory chain. Quinohemoprotein alcohol dehydrogenase (ADH) catalyzes the oxidation of ethanol to acetaldehyde by transferring electrons to the ubiquinone embedded in the membrane phospholipids (PubMed:1646200, PubMed:18838797, PubMed:7592433, PubMed:8617755, PubMed:9878716). The electrons transfer from ethanol to membranous ubiquinone occurs from pyrroloquinoline quinone (PQQ) to one heme c in subunit I (AdhA), and finally to two heme c in subunit II (AdhB) (PubMed:18838797, PubMed:8617755, PubMed:9878716). Besides ubiquinone reduction, ADH also has a ubiquinol (QH2) oxidation reaction which mediates electron transfer from ubiquinol to the non-energy generating bypass oxidase system (PubMed:1646200, PubMed:9878716). The electrons transfer occurs from ubiquinol (QH2) to the additional heme c within subunit II (AdhB) (PubMed:8617755, PubMed:9878716). Also able to use quinone analogs such as 2,3-dimethoxy-5-methyl-6-n-decyl-1,4-benzoquinone (DB) and 2,3-dimethoxy-5-methyl-6-n-pentyl-1,4-benzoquinone (PB) (PubMed:9878716).</text>
</comment>
<comment type="catalytic activity">
    <reaction evidence="4 5 7">
        <text>ethanol + a ubiquinone = a ubiquinol + acetaldehyde</text>
        <dbReference type="Rhea" id="RHEA:26442"/>
        <dbReference type="Rhea" id="RHEA-COMP:9565"/>
        <dbReference type="Rhea" id="RHEA-COMP:9566"/>
        <dbReference type="ChEBI" id="CHEBI:15343"/>
        <dbReference type="ChEBI" id="CHEBI:16236"/>
        <dbReference type="ChEBI" id="CHEBI:16389"/>
        <dbReference type="ChEBI" id="CHEBI:17976"/>
        <dbReference type="EC" id="1.1.5.5"/>
    </reaction>
</comment>
<comment type="cofactor">
    <cofactor evidence="5">
        <name>heme c</name>
        <dbReference type="ChEBI" id="CHEBI:61717"/>
    </cofactor>
    <text evidence="5">Binds 3 heme c groups covalently per subunit.</text>
</comment>
<comment type="activity regulation">
    <text evidence="7">2,6-dichloro-4-dicyanovinylphenol (PC16) and antimycin A inhibit ubiquinol oxidation activity more selectively than the ubiquinone reductase activity.</text>
</comment>
<comment type="biophysicochemical properties">
    <kinetics>
        <KM evidence="7">7.7 uM for ubiquinone-2 (for ubiquinone reduction activity in inactive ADH at pH 5)</KM>
        <KM evidence="7">8.4 uM for ubiquinone-2 (for ubiquinone reduction activity in active ADH at pH 5)</KM>
        <KM evidence="7">13 uM for ubiquinol-2 (for ubiquinol oxidation activity in inactive ADH at pH 5)</KM>
        <KM evidence="5">32 uM for ethanol (for ubiquinone reduction activity in active ADH at pH 4.5)</KM>
        <KM evidence="7">36 uM for ubiquinol-2 (for ubiquinol oxidation activity in active ADH at pH 5)</KM>
        <KM evidence="7">170 uM for ferricyanide (for ubiquinol oxidation activity in active ADH at pH 5)</KM>
        <KM evidence="7">200 uM for ferricyanide (for ubiquinol oxidation activity in inactive ADH at pH 5)</KM>
        <Vmax evidence="7">175.0 umol/min/mg enzyme toward ubiquinol-2 (for ubiquinol oxidation activity in inactive ADH at pH 5)</Vmax>
        <Vmax evidence="7">167.0 umol/min/mg enzyme toward ferricyanide (for ubiquinol oxidation activity in inactive ADH at pH 5)</Vmax>
        <Vmax evidence="7">104.0 umol/min/mg enzyme toward ubiquinol-2 (for ubiquinol oxidation activity in active ADH at pH 5)</Vmax>
        <Vmax evidence="7">81.0 umol/min/mg enzyme toward ferricyanide (for ubiquinol oxidation activity in active ADH at pH 5)</Vmax>
        <Vmax evidence="5">70.0 umol/min/mg enzyme toward ethanol (for ubiquinone reduction activity in active ADH at pH 4.5)</Vmax>
        <Vmax evidence="7">54.0 umol/min/mg enzyme toward ubiquinone-2 (for ubiquinone reduction activity in active ADH at pH 5)</Vmax>
        <Vmax evidence="7">2.0 umol/min/mg enzyme toward ubiquinone-2 (for ubiquinone reduction activity in inactive ADH at pH 5)</Vmax>
    </kinetics>
    <phDependence>
        <text evidence="7">Optimum pH is 5 for ubiquinol oxidation activity.</text>
    </phDependence>
</comment>
<comment type="subunit">
    <text evidence="5 14">The alcohol dehydrogenase multicomponent enzyme system is composed of a dehydrogenase subunit I (AdhA), a cytochrome c subunit II (AdhB) and a subunit III (AdhS).</text>
</comment>
<comment type="subcellular location">
    <subcellularLocation>
        <location evidence="11">Cell membrane</location>
        <topology evidence="11">Peripheral membrane protein</topology>
        <orientation evidence="11">Periplasmic side</orientation>
    </subcellularLocation>
</comment>
<comment type="induction">
    <text evidence="12">Constitutively expressed.</text>
</comment>
<comment type="miscellaneous">
    <text evidence="4 7">Inactive ADH is produced under conditions of low pH and high aeration, where the bypass oxidase activity is highly elevated. In spite of having 10 times less enzyme activity than active ADH, inactive ADH is not distinguished from active ADH with respect to their subunit compositions, molecular sizes and prosthetic groups. It seems that in inactive ADH, an improper interaction between subunit II and subunit I/III complex impairs efficient intersubunit electron transport in the ADH complex.</text>
</comment>
<dbReference type="EC" id="1.1.5.5" evidence="4 5 7"/>
<dbReference type="EMBL" id="M58760">
    <property type="protein sequence ID" value="AAA24935.1"/>
    <property type="molecule type" value="Genomic_DNA"/>
</dbReference>
<dbReference type="EMBL" id="D86375">
    <property type="protein sequence ID" value="BAA19754.1"/>
    <property type="molecule type" value="Genomic_DNA"/>
</dbReference>
<dbReference type="EMBL" id="CP000009">
    <property type="protein sequence ID" value="AAW60836.1"/>
    <property type="molecule type" value="Genomic_DNA"/>
</dbReference>
<dbReference type="RefSeq" id="WP_011252628.1">
    <property type="nucleotide sequence ID" value="NC_006677.1"/>
</dbReference>
<dbReference type="PDB" id="8GY2">
    <property type="method" value="EM"/>
    <property type="resolution" value="2.50 A"/>
    <property type="chains" value="B=1-478"/>
</dbReference>
<dbReference type="PDBsum" id="8GY2"/>
<dbReference type="EMDB" id="EMD-34368"/>
<dbReference type="SMR" id="Q47945"/>
<dbReference type="STRING" id="290633.GOX1067"/>
<dbReference type="KEGG" id="gox:GOX1067"/>
<dbReference type="eggNOG" id="COG2010">
    <property type="taxonomic scope" value="Bacteria"/>
</dbReference>
<dbReference type="HOGENOM" id="CLU_028594_0_0_5"/>
<dbReference type="BioCyc" id="MetaCyc:MONOMER-15243"/>
<dbReference type="Proteomes" id="UP000006375">
    <property type="component" value="Chromosome"/>
</dbReference>
<dbReference type="GO" id="GO:0005886">
    <property type="term" value="C:plasma membrane"/>
    <property type="evidence" value="ECO:0007669"/>
    <property type="project" value="UniProtKB-SubCell"/>
</dbReference>
<dbReference type="GO" id="GO:0009055">
    <property type="term" value="F:electron transfer activity"/>
    <property type="evidence" value="ECO:0007669"/>
    <property type="project" value="InterPro"/>
</dbReference>
<dbReference type="GO" id="GO:0020037">
    <property type="term" value="F:heme binding"/>
    <property type="evidence" value="ECO:0007669"/>
    <property type="project" value="InterPro"/>
</dbReference>
<dbReference type="GO" id="GO:0005506">
    <property type="term" value="F:iron ion binding"/>
    <property type="evidence" value="ECO:0007669"/>
    <property type="project" value="InterPro"/>
</dbReference>
<dbReference type="GO" id="GO:0016614">
    <property type="term" value="F:oxidoreductase activity, acting on CH-OH group of donors"/>
    <property type="evidence" value="ECO:0007669"/>
    <property type="project" value="InterPro"/>
</dbReference>
<dbReference type="Gene3D" id="1.10.760.10">
    <property type="entry name" value="Cytochrome c-like domain"/>
    <property type="match status" value="3"/>
</dbReference>
<dbReference type="InterPro" id="IPR009056">
    <property type="entry name" value="Cyt_c-like_dom"/>
</dbReference>
<dbReference type="InterPro" id="IPR036909">
    <property type="entry name" value="Cyt_c-like_dom_sf"/>
</dbReference>
<dbReference type="InterPro" id="IPR008168">
    <property type="entry name" value="Cyt_C_IC"/>
</dbReference>
<dbReference type="InterPro" id="IPR051459">
    <property type="entry name" value="Cytochrome_c-type_DH"/>
</dbReference>
<dbReference type="InterPro" id="IPR014353">
    <property type="entry name" value="Membr-bd_ADH_cyt_c"/>
</dbReference>
<dbReference type="PANTHER" id="PTHR35008:SF8">
    <property type="entry name" value="ALCOHOL DEHYDROGENASE CYTOCHROME C SUBUNIT"/>
    <property type="match status" value="1"/>
</dbReference>
<dbReference type="PANTHER" id="PTHR35008">
    <property type="entry name" value="BLL4482 PROTEIN-RELATED"/>
    <property type="match status" value="1"/>
</dbReference>
<dbReference type="Pfam" id="PF00034">
    <property type="entry name" value="Cytochrom_C"/>
    <property type="match status" value="2"/>
</dbReference>
<dbReference type="PIRSF" id="PIRSF000018">
    <property type="entry name" value="Mb_ADH_cyt_c"/>
    <property type="match status" value="1"/>
</dbReference>
<dbReference type="PRINTS" id="PR00605">
    <property type="entry name" value="CYTCHROMECIC"/>
</dbReference>
<dbReference type="SUPFAM" id="SSF46626">
    <property type="entry name" value="Cytochrome c"/>
    <property type="match status" value="3"/>
</dbReference>
<dbReference type="PROSITE" id="PS51007">
    <property type="entry name" value="CYTC"/>
    <property type="match status" value="3"/>
</dbReference>
<accession>Q47945</accession>
<accession>O08083</accession>
<accession>Q5FS10</accession>
<keyword id="KW-0002">3D-structure</keyword>
<keyword id="KW-1003">Cell membrane</keyword>
<keyword id="KW-0903">Direct protein sequencing</keyword>
<keyword id="KW-0249">Electron transport</keyword>
<keyword id="KW-0349">Heme</keyword>
<keyword id="KW-0408">Iron</keyword>
<keyword id="KW-0472">Membrane</keyword>
<keyword id="KW-0479">Metal-binding</keyword>
<keyword id="KW-0560">Oxidoreductase</keyword>
<keyword id="KW-0873">Pyrrolidone carboxylic acid</keyword>
<keyword id="KW-1185">Reference proteome</keyword>
<keyword id="KW-0677">Repeat</keyword>
<keyword id="KW-0679">Respiratory chain</keyword>
<keyword id="KW-0732">Signal</keyword>
<keyword id="KW-0813">Transport</keyword>
<name>ADHB_GLUOX</name>
<evidence type="ECO:0000255" key="1">
    <source>
        <dbReference type="PROSITE-ProRule" id="PRU00433"/>
    </source>
</evidence>
<evidence type="ECO:0000269" key="2">
    <source>
    </source>
</evidence>
<evidence type="ECO:0000269" key="3">
    <source>
    </source>
</evidence>
<evidence type="ECO:0000269" key="4">
    <source>
    </source>
</evidence>
<evidence type="ECO:0000269" key="5">
    <source>
    </source>
</evidence>
<evidence type="ECO:0000269" key="6">
    <source>
    </source>
</evidence>
<evidence type="ECO:0000269" key="7">
    <source>
    </source>
</evidence>
<evidence type="ECO:0000303" key="8">
    <source>
    </source>
</evidence>
<evidence type="ECO:0000303" key="9">
    <source>
    </source>
</evidence>
<evidence type="ECO:0000303" key="10">
    <source>
    </source>
</evidence>
<evidence type="ECO:0000305" key="11"/>
<evidence type="ECO:0000305" key="12">
    <source>
    </source>
</evidence>
<evidence type="ECO:0000305" key="13">
    <source>
    </source>
</evidence>
<evidence type="ECO:0000305" key="14">
    <source>
    </source>
</evidence>
<proteinExistence type="evidence at protein level"/>
<sequence>MLNALTRDRLVSEMKQGWKLAAAIGLMAVSFGAAHAQDADEALIKRGEYVARLSDCIACHTALHGQPYAGGLEIKSPIGTIYSTNITPDPEHGIGNYTLEDFTKALRKGIRKDGATVYPAMPYPEFARLSDDDIRAMYAFFMHGVKPVALQNKAPDISWPLSMRWPLGMWRAMFVPSMTPGVDKSISDPEVARGEYLVNGPGHCGECHTPRGFGMQVKAYGTAGGNAYLAGGAPIDNWIAPSLRSNSDTGLGRWSEDDIVTFLKSGRIDHSAVFGGMADVVAYSTQHWSDDDLRATAKYLKSMPAVPEGKNLGQDDGQTTALLNKGGQGNAGAEVYLHNCAICHMNDGTGVNRMFPPLAGNPVVITDDPTSLANVVAFGGILPPTNSAPSAVAMPGFKNHLSDQEMADVVNFMRKGWGNNAPGTVSASDIQKLRTTGAPVSTAGWNVSSKGWMAYMPQPYGEDWTFSPQTHTGVDDAQ</sequence>
<gene>
    <name evidence="9" type="primary">adhB</name>
    <name type="ordered locus">GOX1067</name>
</gene>
<feature type="signal peptide" evidence="6">
    <location>
        <begin position="1"/>
        <end position="36"/>
    </location>
</feature>
<feature type="chain" id="PRO_0000006597" description="Alcohol dehydrogenase (quinone), cytochrome c subunit">
    <location>
        <begin position="37"/>
        <end position="478"/>
    </location>
</feature>
<feature type="domain" description="Cytochrome c 1" evidence="1">
    <location>
        <begin position="42"/>
        <end position="145"/>
    </location>
</feature>
<feature type="domain" description="Cytochrome c 2" evidence="1">
    <location>
        <begin position="189"/>
        <end position="304"/>
    </location>
</feature>
<feature type="domain" description="Cytochrome c 3" evidence="1">
    <location>
        <begin position="327"/>
        <end position="417"/>
    </location>
</feature>
<feature type="binding site" description="covalent" evidence="1">
    <location>
        <position position="56"/>
    </location>
    <ligand>
        <name>heme c</name>
        <dbReference type="ChEBI" id="CHEBI:61717"/>
        <label>1</label>
    </ligand>
</feature>
<feature type="binding site" description="covalent" evidence="1">
    <location>
        <position position="59"/>
    </location>
    <ligand>
        <name>heme c</name>
        <dbReference type="ChEBI" id="CHEBI:61717"/>
        <label>1</label>
    </ligand>
</feature>
<feature type="binding site" description="axial binding residue" evidence="1">
    <location>
        <position position="60"/>
    </location>
    <ligand>
        <name>heme c</name>
        <dbReference type="ChEBI" id="CHEBI:61717"/>
        <label>1</label>
    </ligand>
    <ligandPart>
        <name>Fe</name>
        <dbReference type="ChEBI" id="CHEBI:18248"/>
    </ligandPart>
</feature>
<feature type="binding site" description="covalent" evidence="1">
    <location>
        <position position="204"/>
    </location>
    <ligand>
        <name>heme c</name>
        <dbReference type="ChEBI" id="CHEBI:61717"/>
        <label>2</label>
    </ligand>
</feature>
<feature type="binding site" description="covalent" evidence="1">
    <location>
        <position position="207"/>
    </location>
    <ligand>
        <name>heme c</name>
        <dbReference type="ChEBI" id="CHEBI:61717"/>
        <label>2</label>
    </ligand>
</feature>
<feature type="binding site" description="axial binding residue" evidence="1">
    <location>
        <position position="208"/>
    </location>
    <ligand>
        <name>heme c</name>
        <dbReference type="ChEBI" id="CHEBI:61717"/>
        <label>2</label>
    </ligand>
    <ligandPart>
        <name>Fe</name>
        <dbReference type="ChEBI" id="CHEBI:18248"/>
    </ligandPart>
</feature>
<feature type="binding site" description="covalent" evidence="1">
    <location>
        <position position="340"/>
    </location>
    <ligand>
        <name>heme c</name>
        <dbReference type="ChEBI" id="CHEBI:61717"/>
        <label>3</label>
    </ligand>
</feature>
<feature type="binding site" description="covalent" evidence="1">
    <location>
        <position position="343"/>
    </location>
    <ligand>
        <name>heme c</name>
        <dbReference type="ChEBI" id="CHEBI:61717"/>
        <label>3</label>
    </ligand>
</feature>
<feature type="binding site" description="axial binding residue" evidence="1">
    <location>
        <position position="344"/>
    </location>
    <ligand>
        <name>heme c</name>
        <dbReference type="ChEBI" id="CHEBI:61717"/>
        <label>3</label>
    </ligand>
    <ligandPart>
        <name>Fe</name>
        <dbReference type="ChEBI" id="CHEBI:18248"/>
    </ligandPart>
</feature>
<feature type="modified residue" description="Pyrrolidone carboxylic acid" evidence="6">
    <location>
        <position position="37"/>
    </location>
</feature>